<comment type="function">
    <text evidence="1">Catalyzes a salvage reaction resulting in the formation of AMP, that is energically less costly than de novo synthesis.</text>
</comment>
<comment type="catalytic activity">
    <reaction evidence="1">
        <text>AMP + diphosphate = 5-phospho-alpha-D-ribose 1-diphosphate + adenine</text>
        <dbReference type="Rhea" id="RHEA:16609"/>
        <dbReference type="ChEBI" id="CHEBI:16708"/>
        <dbReference type="ChEBI" id="CHEBI:33019"/>
        <dbReference type="ChEBI" id="CHEBI:58017"/>
        <dbReference type="ChEBI" id="CHEBI:456215"/>
        <dbReference type="EC" id="2.4.2.7"/>
    </reaction>
</comment>
<comment type="pathway">
    <text evidence="1">Purine metabolism; AMP biosynthesis via salvage pathway; AMP from adenine: step 1/1.</text>
</comment>
<comment type="subunit">
    <text evidence="1">Homodimer.</text>
</comment>
<comment type="subcellular location">
    <subcellularLocation>
        <location evidence="1">Cytoplasm</location>
    </subcellularLocation>
</comment>
<comment type="similarity">
    <text evidence="1">Belongs to the purine/pyrimidine phosphoribosyltransferase family.</text>
</comment>
<reference key="1">
    <citation type="journal article" date="2008" name="BMC Microbiol.">
        <title>Complete genome sequence of Treponema pallidum ssp. pallidum strain SS14 determined with oligonucleotide arrays.</title>
        <authorList>
            <person name="Matejkova P."/>
            <person name="Strouhal M."/>
            <person name="Smajs D."/>
            <person name="Norris S.J."/>
            <person name="Palzkill T."/>
            <person name="Petrosino J.F."/>
            <person name="Sodergren E."/>
            <person name="Norton J.E."/>
            <person name="Singh J."/>
            <person name="Richmond T.A."/>
            <person name="Molla M.N."/>
            <person name="Albert T.J."/>
            <person name="Weinstock G.M."/>
        </authorList>
    </citation>
    <scope>NUCLEOTIDE SEQUENCE [LARGE SCALE GENOMIC DNA]</scope>
    <source>
        <strain>SS14</strain>
    </source>
</reference>
<keyword id="KW-0963">Cytoplasm</keyword>
<keyword id="KW-0328">Glycosyltransferase</keyword>
<keyword id="KW-0660">Purine salvage</keyword>
<keyword id="KW-0808">Transferase</keyword>
<name>APT_TREPS</name>
<organism>
    <name type="scientific">Treponema pallidum subsp. pallidum (strain SS14)</name>
    <dbReference type="NCBI Taxonomy" id="455434"/>
    <lineage>
        <taxon>Bacteria</taxon>
        <taxon>Pseudomonadati</taxon>
        <taxon>Spirochaetota</taxon>
        <taxon>Spirochaetia</taxon>
        <taxon>Spirochaetales</taxon>
        <taxon>Treponemataceae</taxon>
        <taxon>Treponema</taxon>
    </lineage>
</organism>
<protein>
    <recommendedName>
        <fullName evidence="1">Adenine phosphoribosyltransferase</fullName>
        <shortName evidence="1">APRT</shortName>
        <ecNumber evidence="1">2.4.2.7</ecNumber>
    </recommendedName>
</protein>
<feature type="chain" id="PRO_1000089016" description="Adenine phosphoribosyltransferase">
    <location>
        <begin position="1"/>
        <end position="190"/>
    </location>
</feature>
<proteinExistence type="inferred from homology"/>
<evidence type="ECO:0000255" key="1">
    <source>
        <dbReference type="HAMAP-Rule" id="MF_00004"/>
    </source>
</evidence>
<sequence>MRGIGRYHAPVDGHAALDRAIRKRIDFPKKGILYYDITGVLMNAAVFRYCLDQMVEFYRDEHVTAVAAIESRGFIFAAPFADRMGIPLILVRKAGKLPGDTYSCSYSLEYGKATVEVHKSDVVAGARVLLTDDLIATGGTLNAARTMLRAGGAEVVGFFAVVGLPFLRYHELIGDLPVRTLIEYNQETSN</sequence>
<accession>B2S4S6</accession>
<dbReference type="EC" id="2.4.2.7" evidence="1"/>
<dbReference type="EMBL" id="CP000805">
    <property type="protein sequence ID" value="ACD71455.1"/>
    <property type="molecule type" value="Genomic_DNA"/>
</dbReference>
<dbReference type="RefSeq" id="WP_010882483.1">
    <property type="nucleotide sequence ID" value="NC_021508.1"/>
</dbReference>
<dbReference type="SMR" id="B2S4S6"/>
<dbReference type="KEGG" id="tpp:TPASS_1039"/>
<dbReference type="PATRIC" id="fig|455434.6.peg.1030"/>
<dbReference type="UniPathway" id="UPA00588">
    <property type="reaction ID" value="UER00646"/>
</dbReference>
<dbReference type="Proteomes" id="UP000001202">
    <property type="component" value="Chromosome"/>
</dbReference>
<dbReference type="GO" id="GO:0005737">
    <property type="term" value="C:cytoplasm"/>
    <property type="evidence" value="ECO:0007669"/>
    <property type="project" value="UniProtKB-SubCell"/>
</dbReference>
<dbReference type="GO" id="GO:0003999">
    <property type="term" value="F:adenine phosphoribosyltransferase activity"/>
    <property type="evidence" value="ECO:0007669"/>
    <property type="project" value="UniProtKB-UniRule"/>
</dbReference>
<dbReference type="GO" id="GO:0006168">
    <property type="term" value="P:adenine salvage"/>
    <property type="evidence" value="ECO:0007669"/>
    <property type="project" value="InterPro"/>
</dbReference>
<dbReference type="GO" id="GO:0044209">
    <property type="term" value="P:AMP salvage"/>
    <property type="evidence" value="ECO:0007669"/>
    <property type="project" value="UniProtKB-UniRule"/>
</dbReference>
<dbReference type="GO" id="GO:0006166">
    <property type="term" value="P:purine ribonucleoside salvage"/>
    <property type="evidence" value="ECO:0007669"/>
    <property type="project" value="UniProtKB-KW"/>
</dbReference>
<dbReference type="CDD" id="cd06223">
    <property type="entry name" value="PRTases_typeI"/>
    <property type="match status" value="1"/>
</dbReference>
<dbReference type="FunFam" id="3.40.50.2020:FF:000021">
    <property type="entry name" value="Adenine phosphoribosyltransferase"/>
    <property type="match status" value="1"/>
</dbReference>
<dbReference type="Gene3D" id="3.40.50.2020">
    <property type="match status" value="1"/>
</dbReference>
<dbReference type="HAMAP" id="MF_00004">
    <property type="entry name" value="Aden_phosphoribosyltr"/>
    <property type="match status" value="1"/>
</dbReference>
<dbReference type="InterPro" id="IPR005764">
    <property type="entry name" value="Ade_phspho_trans"/>
</dbReference>
<dbReference type="InterPro" id="IPR050120">
    <property type="entry name" value="Adenine_PRTase"/>
</dbReference>
<dbReference type="InterPro" id="IPR000836">
    <property type="entry name" value="PRibTrfase_dom"/>
</dbReference>
<dbReference type="InterPro" id="IPR029057">
    <property type="entry name" value="PRTase-like"/>
</dbReference>
<dbReference type="NCBIfam" id="NF002634">
    <property type="entry name" value="PRK02304.1-3"/>
    <property type="match status" value="1"/>
</dbReference>
<dbReference type="NCBIfam" id="NF002636">
    <property type="entry name" value="PRK02304.1-5"/>
    <property type="match status" value="1"/>
</dbReference>
<dbReference type="PANTHER" id="PTHR11776">
    <property type="entry name" value="ADENINE PHOSPHORIBOSYLTRANSFERASE"/>
    <property type="match status" value="1"/>
</dbReference>
<dbReference type="PANTHER" id="PTHR11776:SF7">
    <property type="entry name" value="PHOSPHORIBOSYLTRANSFERASE DOMAIN-CONTAINING PROTEIN"/>
    <property type="match status" value="1"/>
</dbReference>
<dbReference type="Pfam" id="PF00156">
    <property type="entry name" value="Pribosyltran"/>
    <property type="match status" value="1"/>
</dbReference>
<dbReference type="SUPFAM" id="SSF53271">
    <property type="entry name" value="PRTase-like"/>
    <property type="match status" value="1"/>
</dbReference>
<gene>
    <name evidence="1" type="primary">apt</name>
    <name type="ordered locus">TPASS_1039</name>
</gene>